<proteinExistence type="inferred from homology"/>
<gene>
    <name type="ordered locus">Pfl01_1218</name>
</gene>
<dbReference type="EMBL" id="CP000094">
    <property type="protein sequence ID" value="ABA72961.1"/>
    <property type="molecule type" value="Genomic_DNA"/>
</dbReference>
<dbReference type="RefSeq" id="WP_011332777.1">
    <property type="nucleotide sequence ID" value="NC_007492.2"/>
</dbReference>
<dbReference type="SMR" id="Q3KGZ5"/>
<dbReference type="KEGG" id="pfo:Pfl01_1218"/>
<dbReference type="eggNOG" id="COG3012">
    <property type="taxonomic scope" value="Bacteria"/>
</dbReference>
<dbReference type="HOGENOM" id="CLU_099590_0_1_6"/>
<dbReference type="Proteomes" id="UP000002704">
    <property type="component" value="Chromosome"/>
</dbReference>
<dbReference type="Gene3D" id="3.10.450.50">
    <property type="match status" value="1"/>
</dbReference>
<dbReference type="HAMAP" id="MF_00612">
    <property type="entry name" value="UPF0225"/>
    <property type="match status" value="1"/>
</dbReference>
<dbReference type="InterPro" id="IPR032710">
    <property type="entry name" value="NTF2-like_dom_sf"/>
</dbReference>
<dbReference type="InterPro" id="IPR004027">
    <property type="entry name" value="SEC_C_motif"/>
</dbReference>
<dbReference type="InterPro" id="IPR023006">
    <property type="entry name" value="UPF0225"/>
</dbReference>
<dbReference type="InterPro" id="IPR048469">
    <property type="entry name" value="YchJ-like_M"/>
</dbReference>
<dbReference type="NCBIfam" id="NF001213">
    <property type="entry name" value="PRK00183.1"/>
    <property type="match status" value="1"/>
</dbReference>
<dbReference type="NCBIfam" id="NF002449">
    <property type="entry name" value="PRK01617.1"/>
    <property type="match status" value="1"/>
</dbReference>
<dbReference type="NCBIfam" id="NF002486">
    <property type="entry name" value="PRK01752.1"/>
    <property type="match status" value="1"/>
</dbReference>
<dbReference type="PANTHER" id="PTHR33747:SF1">
    <property type="entry name" value="ADENYLATE CYCLASE-ASSOCIATED CAP C-TERMINAL DOMAIN-CONTAINING PROTEIN"/>
    <property type="match status" value="1"/>
</dbReference>
<dbReference type="PANTHER" id="PTHR33747">
    <property type="entry name" value="UPF0225 PROTEIN SCO1677"/>
    <property type="match status" value="1"/>
</dbReference>
<dbReference type="Pfam" id="PF02810">
    <property type="entry name" value="SEC-C"/>
    <property type="match status" value="1"/>
</dbReference>
<dbReference type="Pfam" id="PF17775">
    <property type="entry name" value="YchJ_M-like"/>
    <property type="match status" value="1"/>
</dbReference>
<dbReference type="SUPFAM" id="SSF54427">
    <property type="entry name" value="NTF2-like"/>
    <property type="match status" value="1"/>
</dbReference>
<dbReference type="SUPFAM" id="SSF103642">
    <property type="entry name" value="Sec-C motif"/>
    <property type="match status" value="1"/>
</dbReference>
<protein>
    <recommendedName>
        <fullName evidence="1">UPF0225 protein Pfl01_1218</fullName>
    </recommendedName>
</protein>
<evidence type="ECO:0000255" key="1">
    <source>
        <dbReference type="HAMAP-Rule" id="MF_00612"/>
    </source>
</evidence>
<sequence length="158" mass="17176">MSTAICPCGSGNLLDACCGHYHAGHPAPCAEALMRSRYSAYVLGLIDYLVATTLPAQQAGLDRQSISNWSAQSTWLGLDVESSEVLGGQPEHAFVTFTARWHDGQGEHSHRERSSFVQNSGRWYFIDPTVQLKLGRNDACPCASGQKFKKCCAGYFGS</sequence>
<name>Y1218_PSEPF</name>
<feature type="chain" id="PRO_1000061301" description="UPF0225 protein Pfl01_1218">
    <location>
        <begin position="1"/>
        <end position="158"/>
    </location>
</feature>
<accession>Q3KGZ5</accession>
<comment type="similarity">
    <text evidence="1">Belongs to the UPF0225 family.</text>
</comment>
<reference key="1">
    <citation type="journal article" date="2009" name="Genome Biol.">
        <title>Genomic and genetic analyses of diversity and plant interactions of Pseudomonas fluorescens.</title>
        <authorList>
            <person name="Silby M.W."/>
            <person name="Cerdeno-Tarraga A.M."/>
            <person name="Vernikos G.S."/>
            <person name="Giddens S.R."/>
            <person name="Jackson R.W."/>
            <person name="Preston G.M."/>
            <person name="Zhang X.-X."/>
            <person name="Moon C.D."/>
            <person name="Gehrig S.M."/>
            <person name="Godfrey S.A.C."/>
            <person name="Knight C.G."/>
            <person name="Malone J.G."/>
            <person name="Robinson Z."/>
            <person name="Spiers A.J."/>
            <person name="Harris S."/>
            <person name="Challis G.L."/>
            <person name="Yaxley A.M."/>
            <person name="Harris D."/>
            <person name="Seeger K."/>
            <person name="Murphy L."/>
            <person name="Rutter S."/>
            <person name="Squares R."/>
            <person name="Quail M.A."/>
            <person name="Saunders E."/>
            <person name="Mavromatis K."/>
            <person name="Brettin T.S."/>
            <person name="Bentley S.D."/>
            <person name="Hothersall J."/>
            <person name="Stephens E."/>
            <person name="Thomas C.M."/>
            <person name="Parkhill J."/>
            <person name="Levy S.B."/>
            <person name="Rainey P.B."/>
            <person name="Thomson N.R."/>
        </authorList>
    </citation>
    <scope>NUCLEOTIDE SEQUENCE [LARGE SCALE GENOMIC DNA]</scope>
    <source>
        <strain>Pf0-1</strain>
    </source>
</reference>
<organism>
    <name type="scientific">Pseudomonas fluorescens (strain Pf0-1)</name>
    <dbReference type="NCBI Taxonomy" id="205922"/>
    <lineage>
        <taxon>Bacteria</taxon>
        <taxon>Pseudomonadati</taxon>
        <taxon>Pseudomonadota</taxon>
        <taxon>Gammaproteobacteria</taxon>
        <taxon>Pseudomonadales</taxon>
        <taxon>Pseudomonadaceae</taxon>
        <taxon>Pseudomonas</taxon>
    </lineage>
</organism>